<keyword id="KW-0028">Amino-acid biosynthesis</keyword>
<keyword id="KW-0963">Cytoplasm</keyword>
<keyword id="KW-0554">One-carbon metabolism</keyword>
<keyword id="KW-0663">Pyridoxal phosphate</keyword>
<keyword id="KW-1185">Reference proteome</keyword>
<keyword id="KW-0808">Transferase</keyword>
<name>GLYA_GEOKA</name>
<organism>
    <name type="scientific">Geobacillus kaustophilus (strain HTA426)</name>
    <dbReference type="NCBI Taxonomy" id="235909"/>
    <lineage>
        <taxon>Bacteria</taxon>
        <taxon>Bacillati</taxon>
        <taxon>Bacillota</taxon>
        <taxon>Bacilli</taxon>
        <taxon>Bacillales</taxon>
        <taxon>Anoxybacillaceae</taxon>
        <taxon>Geobacillus</taxon>
        <taxon>Geobacillus thermoleovorans group</taxon>
    </lineage>
</organism>
<sequence length="412" mass="45175">MNYLPQQDPQVFAAIEQERKRQHAKIELIASENFVSRAVMEAQGSVLTNKYAEGYPGRRYYGGCEYVDIVEDLARERAKQLFGAEHVNVQPHSGAQANMAVYFTVLEHGDTVLGMNLSHGGHLTHGSPVNFSGIQYNFVEYGVDPETHVIDYDDVREKARLHRPKLIVAGASAYPRIIDFAKFREIADEVGAYLMVDMAHIAGLVAAGVHPNPVPYAHFVTTTTHKTLRGPRGGMILCQEQFAKQIDKAIFPGIQGGPLMHVIAAKAVALGEALQDDFKVYAKRVVENAKRLAAALQNEGFTLISGGTDNHLLLVDLRPQQLTGKTAEKVLDEVGITVNKNTIPYDPESPFVTSGIRIGTAAVTTRGFGLEEMDEIAAIIGLVLKNVGSEQALEEARQRVAALTEKFPLYQD</sequence>
<feature type="chain" id="PRO_0000113580" description="Serine hydroxymethyltransferase">
    <location>
        <begin position="1"/>
        <end position="412"/>
    </location>
</feature>
<feature type="binding site" evidence="1">
    <location>
        <position position="117"/>
    </location>
    <ligand>
        <name>(6S)-5,6,7,8-tetrahydrofolate</name>
        <dbReference type="ChEBI" id="CHEBI:57453"/>
    </ligand>
</feature>
<feature type="binding site" evidence="1">
    <location>
        <begin position="121"/>
        <end position="123"/>
    </location>
    <ligand>
        <name>(6S)-5,6,7,8-tetrahydrofolate</name>
        <dbReference type="ChEBI" id="CHEBI:57453"/>
    </ligand>
</feature>
<feature type="binding site" evidence="1">
    <location>
        <begin position="349"/>
        <end position="351"/>
    </location>
    <ligand>
        <name>(6S)-5,6,7,8-tetrahydrofolate</name>
        <dbReference type="ChEBI" id="CHEBI:57453"/>
    </ligand>
</feature>
<feature type="site" description="Plays an important role in substrate specificity" evidence="1">
    <location>
        <position position="225"/>
    </location>
</feature>
<feature type="modified residue" description="N6-(pyridoxal phosphate)lysine" evidence="1">
    <location>
        <position position="226"/>
    </location>
</feature>
<protein>
    <recommendedName>
        <fullName evidence="1">Serine hydroxymethyltransferase</fullName>
        <shortName evidence="1">SHMT</shortName>
        <shortName evidence="1">Serine methylase</shortName>
        <ecNumber evidence="1">2.1.2.1</ecNumber>
    </recommendedName>
</protein>
<dbReference type="EC" id="2.1.2.1" evidence="1"/>
<dbReference type="EMBL" id="BA000043">
    <property type="protein sequence ID" value="BAD77654.1"/>
    <property type="molecule type" value="Genomic_DNA"/>
</dbReference>
<dbReference type="RefSeq" id="WP_011232836.1">
    <property type="nucleotide sequence ID" value="NC_006510.1"/>
</dbReference>
<dbReference type="SMR" id="Q5KUI2"/>
<dbReference type="STRING" id="235909.GK3369"/>
<dbReference type="DrugBank" id="DB03256">
    <property type="generic name" value="(6R)-Folinic acid"/>
</dbReference>
<dbReference type="GeneID" id="32065252"/>
<dbReference type="KEGG" id="gka:GK3369"/>
<dbReference type="eggNOG" id="COG0112">
    <property type="taxonomic scope" value="Bacteria"/>
</dbReference>
<dbReference type="HOGENOM" id="CLU_022477_2_1_9"/>
<dbReference type="UniPathway" id="UPA00193"/>
<dbReference type="UniPathway" id="UPA00288">
    <property type="reaction ID" value="UER01023"/>
</dbReference>
<dbReference type="Proteomes" id="UP000001172">
    <property type="component" value="Chromosome"/>
</dbReference>
<dbReference type="GO" id="GO:0005829">
    <property type="term" value="C:cytosol"/>
    <property type="evidence" value="ECO:0007669"/>
    <property type="project" value="TreeGrafter"/>
</dbReference>
<dbReference type="GO" id="GO:0004372">
    <property type="term" value="F:glycine hydroxymethyltransferase activity"/>
    <property type="evidence" value="ECO:0007669"/>
    <property type="project" value="UniProtKB-UniRule"/>
</dbReference>
<dbReference type="GO" id="GO:0030170">
    <property type="term" value="F:pyridoxal phosphate binding"/>
    <property type="evidence" value="ECO:0007669"/>
    <property type="project" value="UniProtKB-UniRule"/>
</dbReference>
<dbReference type="GO" id="GO:0019264">
    <property type="term" value="P:glycine biosynthetic process from serine"/>
    <property type="evidence" value="ECO:0007669"/>
    <property type="project" value="UniProtKB-UniRule"/>
</dbReference>
<dbReference type="GO" id="GO:0035999">
    <property type="term" value="P:tetrahydrofolate interconversion"/>
    <property type="evidence" value="ECO:0007669"/>
    <property type="project" value="UniProtKB-UniRule"/>
</dbReference>
<dbReference type="CDD" id="cd00378">
    <property type="entry name" value="SHMT"/>
    <property type="match status" value="1"/>
</dbReference>
<dbReference type="FunFam" id="3.40.640.10:FF:000001">
    <property type="entry name" value="Serine hydroxymethyltransferase"/>
    <property type="match status" value="1"/>
</dbReference>
<dbReference type="FunFam" id="3.90.1150.10:FF:000003">
    <property type="entry name" value="Serine hydroxymethyltransferase"/>
    <property type="match status" value="1"/>
</dbReference>
<dbReference type="Gene3D" id="3.90.1150.10">
    <property type="entry name" value="Aspartate Aminotransferase, domain 1"/>
    <property type="match status" value="1"/>
</dbReference>
<dbReference type="Gene3D" id="3.40.640.10">
    <property type="entry name" value="Type I PLP-dependent aspartate aminotransferase-like (Major domain)"/>
    <property type="match status" value="1"/>
</dbReference>
<dbReference type="HAMAP" id="MF_00051">
    <property type="entry name" value="SHMT"/>
    <property type="match status" value="1"/>
</dbReference>
<dbReference type="InterPro" id="IPR015424">
    <property type="entry name" value="PyrdxlP-dep_Trfase"/>
</dbReference>
<dbReference type="InterPro" id="IPR015421">
    <property type="entry name" value="PyrdxlP-dep_Trfase_major"/>
</dbReference>
<dbReference type="InterPro" id="IPR015422">
    <property type="entry name" value="PyrdxlP-dep_Trfase_small"/>
</dbReference>
<dbReference type="InterPro" id="IPR001085">
    <property type="entry name" value="Ser_HO-MeTrfase"/>
</dbReference>
<dbReference type="InterPro" id="IPR049943">
    <property type="entry name" value="Ser_HO-MeTrfase-like"/>
</dbReference>
<dbReference type="InterPro" id="IPR019798">
    <property type="entry name" value="Ser_HO-MeTrfase_PLP_BS"/>
</dbReference>
<dbReference type="InterPro" id="IPR039429">
    <property type="entry name" value="SHMT-like_dom"/>
</dbReference>
<dbReference type="NCBIfam" id="NF000586">
    <property type="entry name" value="PRK00011.1"/>
    <property type="match status" value="1"/>
</dbReference>
<dbReference type="PANTHER" id="PTHR11680">
    <property type="entry name" value="SERINE HYDROXYMETHYLTRANSFERASE"/>
    <property type="match status" value="1"/>
</dbReference>
<dbReference type="PANTHER" id="PTHR11680:SF35">
    <property type="entry name" value="SERINE HYDROXYMETHYLTRANSFERASE 1"/>
    <property type="match status" value="1"/>
</dbReference>
<dbReference type="Pfam" id="PF00464">
    <property type="entry name" value="SHMT"/>
    <property type="match status" value="1"/>
</dbReference>
<dbReference type="PIRSF" id="PIRSF000412">
    <property type="entry name" value="SHMT"/>
    <property type="match status" value="1"/>
</dbReference>
<dbReference type="SUPFAM" id="SSF53383">
    <property type="entry name" value="PLP-dependent transferases"/>
    <property type="match status" value="1"/>
</dbReference>
<dbReference type="PROSITE" id="PS00096">
    <property type="entry name" value="SHMT"/>
    <property type="match status" value="1"/>
</dbReference>
<comment type="function">
    <text evidence="1">Catalyzes the reversible interconversion of serine and glycine with tetrahydrofolate (THF) serving as the one-carbon carrier. This reaction serves as the major source of one-carbon groups required for the biosynthesis of purines, thymidylate, methionine, and other important biomolecules. Also exhibits THF-independent aldolase activity toward beta-hydroxyamino acids, producing glycine and aldehydes, via a retro-aldol mechanism.</text>
</comment>
<comment type="catalytic activity">
    <reaction evidence="1">
        <text>(6R)-5,10-methylene-5,6,7,8-tetrahydrofolate + glycine + H2O = (6S)-5,6,7,8-tetrahydrofolate + L-serine</text>
        <dbReference type="Rhea" id="RHEA:15481"/>
        <dbReference type="ChEBI" id="CHEBI:15377"/>
        <dbReference type="ChEBI" id="CHEBI:15636"/>
        <dbReference type="ChEBI" id="CHEBI:33384"/>
        <dbReference type="ChEBI" id="CHEBI:57305"/>
        <dbReference type="ChEBI" id="CHEBI:57453"/>
        <dbReference type="EC" id="2.1.2.1"/>
    </reaction>
</comment>
<comment type="cofactor">
    <cofactor evidence="1">
        <name>pyridoxal 5'-phosphate</name>
        <dbReference type="ChEBI" id="CHEBI:597326"/>
    </cofactor>
</comment>
<comment type="pathway">
    <text evidence="1">One-carbon metabolism; tetrahydrofolate interconversion.</text>
</comment>
<comment type="pathway">
    <text evidence="1">Amino-acid biosynthesis; glycine biosynthesis; glycine from L-serine: step 1/1.</text>
</comment>
<comment type="subunit">
    <text evidence="1">Homodimer.</text>
</comment>
<comment type="subcellular location">
    <subcellularLocation>
        <location evidence="1">Cytoplasm</location>
    </subcellularLocation>
</comment>
<comment type="similarity">
    <text evidence="1">Belongs to the SHMT family.</text>
</comment>
<gene>
    <name evidence="1" type="primary">glyA</name>
    <name type="ordered locus">GK3369</name>
</gene>
<evidence type="ECO:0000255" key="1">
    <source>
        <dbReference type="HAMAP-Rule" id="MF_00051"/>
    </source>
</evidence>
<proteinExistence type="inferred from homology"/>
<reference key="1">
    <citation type="journal article" date="2004" name="Nucleic Acids Res.">
        <title>Thermoadaptation trait revealed by the genome sequence of thermophilic Geobacillus kaustophilus.</title>
        <authorList>
            <person name="Takami H."/>
            <person name="Takaki Y."/>
            <person name="Chee G.-J."/>
            <person name="Nishi S."/>
            <person name="Shimamura S."/>
            <person name="Suzuki H."/>
            <person name="Matsui S."/>
            <person name="Uchiyama I."/>
        </authorList>
    </citation>
    <scope>NUCLEOTIDE SEQUENCE [LARGE SCALE GENOMIC DNA]</scope>
    <source>
        <strain>HTA426</strain>
    </source>
</reference>
<accession>Q5KUI2</accession>